<comment type="similarity">
    <text evidence="1">Belongs to the UPF0175 family.</text>
</comment>
<feature type="chain" id="PRO_0000159027" description="UPF0175 protein AF_0597">
    <location>
        <begin position="1"/>
        <end position="87"/>
    </location>
</feature>
<dbReference type="EMBL" id="AE000782">
    <property type="protein sequence ID" value="AAB90637.1"/>
    <property type="molecule type" value="Genomic_DNA"/>
</dbReference>
<dbReference type="PIR" id="E69324">
    <property type="entry name" value="E69324"/>
</dbReference>
<dbReference type="RefSeq" id="WP_010878101.1">
    <property type="nucleotide sequence ID" value="NC_000917.1"/>
</dbReference>
<dbReference type="SMR" id="O29658"/>
<dbReference type="PaxDb" id="224325-AF_0597"/>
<dbReference type="EnsemblBacteria" id="AAB90637">
    <property type="protein sequence ID" value="AAB90637"/>
    <property type="gene ID" value="AF_0597"/>
</dbReference>
<dbReference type="KEGG" id="afu:AF_0597"/>
<dbReference type="eggNOG" id="arCOG00722">
    <property type="taxonomic scope" value="Archaea"/>
</dbReference>
<dbReference type="HOGENOM" id="CLU_154570_4_2_2"/>
<dbReference type="OrthoDB" id="93800at2157"/>
<dbReference type="PhylomeDB" id="O29658"/>
<dbReference type="Proteomes" id="UP000002199">
    <property type="component" value="Chromosome"/>
</dbReference>
<dbReference type="InterPro" id="IPR005368">
    <property type="entry name" value="UPF0175"/>
</dbReference>
<dbReference type="InterPro" id="IPR052264">
    <property type="entry name" value="UPF0175_domain"/>
</dbReference>
<dbReference type="PANTHER" id="PTHR37525">
    <property type="entry name" value="UPF0175 PROTEIN SSL1255"/>
    <property type="match status" value="1"/>
</dbReference>
<dbReference type="PANTHER" id="PTHR37525:SF1">
    <property type="entry name" value="UPF0175 PROTEIN SSL1255"/>
    <property type="match status" value="1"/>
</dbReference>
<dbReference type="Pfam" id="PF03683">
    <property type="entry name" value="UPF0175"/>
    <property type="match status" value="1"/>
</dbReference>
<sequence>MGEGVYVRLWFPKDITKILGEKRLEEEAKLLVAIELYREGIVSLGKAAEIADLSIREFLYELRRRNVPLNYDLEELQKDIDVVGELL</sequence>
<name>Y597_ARCFU</name>
<accession>O29658</accession>
<organism>
    <name type="scientific">Archaeoglobus fulgidus (strain ATCC 49558 / DSM 4304 / JCM 9628 / NBRC 100126 / VC-16)</name>
    <dbReference type="NCBI Taxonomy" id="224325"/>
    <lineage>
        <taxon>Archaea</taxon>
        <taxon>Methanobacteriati</taxon>
        <taxon>Methanobacteriota</taxon>
        <taxon>Archaeoglobi</taxon>
        <taxon>Archaeoglobales</taxon>
        <taxon>Archaeoglobaceae</taxon>
        <taxon>Archaeoglobus</taxon>
    </lineage>
</organism>
<protein>
    <recommendedName>
        <fullName>UPF0175 protein AF_0597</fullName>
    </recommendedName>
</protein>
<proteinExistence type="inferred from homology"/>
<evidence type="ECO:0000305" key="1"/>
<reference key="1">
    <citation type="journal article" date="1997" name="Nature">
        <title>The complete genome sequence of the hyperthermophilic, sulphate-reducing archaeon Archaeoglobus fulgidus.</title>
        <authorList>
            <person name="Klenk H.-P."/>
            <person name="Clayton R.A."/>
            <person name="Tomb J.-F."/>
            <person name="White O."/>
            <person name="Nelson K.E."/>
            <person name="Ketchum K.A."/>
            <person name="Dodson R.J."/>
            <person name="Gwinn M.L."/>
            <person name="Hickey E.K."/>
            <person name="Peterson J.D."/>
            <person name="Richardson D.L."/>
            <person name="Kerlavage A.R."/>
            <person name="Graham D.E."/>
            <person name="Kyrpides N.C."/>
            <person name="Fleischmann R.D."/>
            <person name="Quackenbush J."/>
            <person name="Lee N.H."/>
            <person name="Sutton G.G."/>
            <person name="Gill S.R."/>
            <person name="Kirkness E.F."/>
            <person name="Dougherty B.A."/>
            <person name="McKenney K."/>
            <person name="Adams M.D."/>
            <person name="Loftus B.J."/>
            <person name="Peterson S.N."/>
            <person name="Reich C.I."/>
            <person name="McNeil L.K."/>
            <person name="Badger J.H."/>
            <person name="Glodek A."/>
            <person name="Zhou L."/>
            <person name="Overbeek R."/>
            <person name="Gocayne J.D."/>
            <person name="Weidman J.F."/>
            <person name="McDonald L.A."/>
            <person name="Utterback T.R."/>
            <person name="Cotton M.D."/>
            <person name="Spriggs T."/>
            <person name="Artiach P."/>
            <person name="Kaine B.P."/>
            <person name="Sykes S.M."/>
            <person name="Sadow P.W."/>
            <person name="D'Andrea K.P."/>
            <person name="Bowman C."/>
            <person name="Fujii C."/>
            <person name="Garland S.A."/>
            <person name="Mason T.M."/>
            <person name="Olsen G.J."/>
            <person name="Fraser C.M."/>
            <person name="Smith H.O."/>
            <person name="Woese C.R."/>
            <person name="Venter J.C."/>
        </authorList>
    </citation>
    <scope>NUCLEOTIDE SEQUENCE [LARGE SCALE GENOMIC DNA]</scope>
    <source>
        <strain>ATCC 49558 / DSM 4304 / JCM 9628 / NBRC 100126 / VC-16</strain>
    </source>
</reference>
<keyword id="KW-1185">Reference proteome</keyword>
<gene>
    <name type="ordered locus">AF_0597</name>
</gene>